<dbReference type="EC" id="6.1.1.5" evidence="8"/>
<dbReference type="EMBL" id="D28473">
    <property type="protein sequence ID" value="BAA05835.1"/>
    <property type="status" value="ALT_INIT"/>
    <property type="molecule type" value="mRNA"/>
</dbReference>
<dbReference type="EMBL" id="U04953">
    <property type="protein sequence ID" value="AAA80153.1"/>
    <property type="molecule type" value="mRNA"/>
</dbReference>
<dbReference type="EMBL" id="AK293014">
    <property type="protein sequence ID" value="BAF85703.1"/>
    <property type="molecule type" value="mRNA"/>
</dbReference>
<dbReference type="EMBL" id="BX537429">
    <property type="protein sequence ID" value="CAD97671.1"/>
    <property type="molecule type" value="mRNA"/>
</dbReference>
<dbReference type="EMBL" id="AL136097">
    <property type="status" value="NOT_ANNOTATED_CDS"/>
    <property type="molecule type" value="Genomic_DNA"/>
</dbReference>
<dbReference type="EMBL" id="CH471089">
    <property type="protein sequence ID" value="EAW62813.1"/>
    <property type="molecule type" value="Genomic_DNA"/>
</dbReference>
<dbReference type="CCDS" id="CCDS6694.1"/>
<dbReference type="PIR" id="I59314">
    <property type="entry name" value="I59314"/>
</dbReference>
<dbReference type="RefSeq" id="NP_001365502.1">
    <property type="nucleotide sequence ID" value="NM_001378573.1"/>
</dbReference>
<dbReference type="RefSeq" id="NP_001365503.1">
    <property type="nucleotide sequence ID" value="NM_001378574.1"/>
</dbReference>
<dbReference type="RefSeq" id="NP_001365504.1">
    <property type="nucleotide sequence ID" value="NM_001378575.1"/>
</dbReference>
<dbReference type="RefSeq" id="NP_001365505.1">
    <property type="nucleotide sequence ID" value="NM_001378576.1"/>
</dbReference>
<dbReference type="RefSeq" id="NP_002152.2">
    <property type="nucleotide sequence ID" value="NM_002161.6"/>
</dbReference>
<dbReference type="RefSeq" id="NP_038203.2">
    <property type="nucleotide sequence ID" value="NM_013417.4"/>
</dbReference>
<dbReference type="SMR" id="P41252"/>
<dbReference type="BioGRID" id="109605">
    <property type="interactions" value="408"/>
</dbReference>
<dbReference type="ComplexPortal" id="CPX-2469">
    <property type="entry name" value="Multiaminoacyl-tRNA synthetase complex"/>
</dbReference>
<dbReference type="CORUM" id="P41252"/>
<dbReference type="FunCoup" id="P41252">
    <property type="interactions" value="2974"/>
</dbReference>
<dbReference type="IntAct" id="P41252">
    <property type="interactions" value="109"/>
</dbReference>
<dbReference type="MINT" id="P41252"/>
<dbReference type="STRING" id="9606.ENSP00000364794"/>
<dbReference type="BindingDB" id="P41252"/>
<dbReference type="ChEMBL" id="CHEMBL3235"/>
<dbReference type="DrugBank" id="DB00167">
    <property type="generic name" value="Isoleucine"/>
</dbReference>
<dbReference type="DrugCentral" id="P41252"/>
<dbReference type="CarbonylDB" id="P41252"/>
<dbReference type="GlyGen" id="P41252">
    <property type="glycosylation" value="1 site, 1 O-linked glycan (1 site)"/>
</dbReference>
<dbReference type="iPTMnet" id="P41252"/>
<dbReference type="MetOSite" id="P41252"/>
<dbReference type="PhosphoSitePlus" id="P41252"/>
<dbReference type="SwissPalm" id="P41252"/>
<dbReference type="BioMuta" id="IARS"/>
<dbReference type="DMDM" id="239938717"/>
<dbReference type="jPOST" id="P41252"/>
<dbReference type="MassIVE" id="P41252"/>
<dbReference type="PaxDb" id="9606-ENSP00000364794"/>
<dbReference type="PeptideAtlas" id="P41252"/>
<dbReference type="ProteomicsDB" id="55454"/>
<dbReference type="Pumba" id="P41252"/>
<dbReference type="Antibodypedia" id="28131">
    <property type="antibodies" value="142 antibodies from 22 providers"/>
</dbReference>
<dbReference type="DNASU" id="3376"/>
<dbReference type="Ensembl" id="ENST00000375643.7">
    <property type="protein sequence ID" value="ENSP00000364794.3"/>
    <property type="gene ID" value="ENSG00000196305.19"/>
</dbReference>
<dbReference type="Ensembl" id="ENST00000443024.7">
    <property type="protein sequence ID" value="ENSP00000406448.4"/>
    <property type="gene ID" value="ENSG00000196305.19"/>
</dbReference>
<dbReference type="Ensembl" id="ENST00000683565.1">
    <property type="protein sequence ID" value="ENSP00000507144.1"/>
    <property type="gene ID" value="ENSG00000196305.19"/>
</dbReference>
<dbReference type="Ensembl" id="ENST00000707248.1">
    <property type="protein sequence ID" value="ENSP00000516807.1"/>
    <property type="gene ID" value="ENSG00000291356.1"/>
</dbReference>
<dbReference type="Ensembl" id="ENST00000707249.1">
    <property type="protein sequence ID" value="ENSP00000516808.1"/>
    <property type="gene ID" value="ENSG00000291356.1"/>
</dbReference>
<dbReference type="Ensembl" id="ENST00000707251.1">
    <property type="protein sequence ID" value="ENSP00000516810.1"/>
    <property type="gene ID" value="ENSG00000291356.1"/>
</dbReference>
<dbReference type="GeneID" id="3376"/>
<dbReference type="KEGG" id="hsa:3376"/>
<dbReference type="MANE-Select" id="ENST00000443024.7">
    <property type="protein sequence ID" value="ENSP00000406448.4"/>
    <property type="RefSeq nucleotide sequence ID" value="NM_002161.6"/>
    <property type="RefSeq protein sequence ID" value="NP_002152.2"/>
</dbReference>
<dbReference type="UCSC" id="uc004art.4">
    <property type="organism name" value="human"/>
</dbReference>
<dbReference type="AGR" id="HGNC:5330"/>
<dbReference type="CTD" id="3376"/>
<dbReference type="DisGeNET" id="3376"/>
<dbReference type="GeneCards" id="IARS1"/>
<dbReference type="HGNC" id="HGNC:5330">
    <property type="gene designation" value="IARS1"/>
</dbReference>
<dbReference type="HPA" id="ENSG00000196305">
    <property type="expression patterns" value="Low tissue specificity"/>
</dbReference>
<dbReference type="MalaCards" id="IARS1"/>
<dbReference type="MIM" id="600709">
    <property type="type" value="gene"/>
</dbReference>
<dbReference type="MIM" id="617093">
    <property type="type" value="phenotype"/>
</dbReference>
<dbReference type="neXtProt" id="NX_P41252"/>
<dbReference type="OpenTargets" id="ENSG00000196305"/>
<dbReference type="Orphanet" id="541423">
    <property type="disease" value="Growth delay-intellectual disability-hepatopathy syndrome"/>
</dbReference>
<dbReference type="PharmGKB" id="PA29580"/>
<dbReference type="VEuPathDB" id="HostDB:ENSG00000196305"/>
<dbReference type="eggNOG" id="KOG0434">
    <property type="taxonomic scope" value="Eukaryota"/>
</dbReference>
<dbReference type="GeneTree" id="ENSGT00550000074921"/>
<dbReference type="InParanoid" id="P41252"/>
<dbReference type="OMA" id="EIIVIHK"/>
<dbReference type="OrthoDB" id="1706657at2759"/>
<dbReference type="PAN-GO" id="P41252">
    <property type="GO annotations" value="2 GO annotations based on evolutionary models"/>
</dbReference>
<dbReference type="PhylomeDB" id="P41252"/>
<dbReference type="PathwayCommons" id="P41252"/>
<dbReference type="Reactome" id="R-HSA-2408522">
    <property type="pathway name" value="Selenoamino acid metabolism"/>
</dbReference>
<dbReference type="Reactome" id="R-HSA-379716">
    <property type="pathway name" value="Cytosolic tRNA aminoacylation"/>
</dbReference>
<dbReference type="Reactome" id="R-HSA-9856649">
    <property type="pathway name" value="Transcriptional and post-translational regulation of MITF-M expression and activity"/>
</dbReference>
<dbReference type="SignaLink" id="P41252"/>
<dbReference type="SIGNOR" id="P41252"/>
<dbReference type="BioGRID-ORCS" id="3376">
    <property type="hits" value="800 hits in 1127 CRISPR screens"/>
</dbReference>
<dbReference type="CD-CODE" id="FB4E32DD">
    <property type="entry name" value="Presynaptic clusters and postsynaptic densities"/>
</dbReference>
<dbReference type="ChiTaRS" id="IARS">
    <property type="organism name" value="human"/>
</dbReference>
<dbReference type="GeneWiki" id="IARS"/>
<dbReference type="GenomeRNAi" id="3376"/>
<dbReference type="Pharos" id="P41252">
    <property type="development level" value="Tchem"/>
</dbReference>
<dbReference type="PRO" id="PR:P41252"/>
<dbReference type="Proteomes" id="UP000005640">
    <property type="component" value="Chromosome 9"/>
</dbReference>
<dbReference type="RNAct" id="P41252">
    <property type="molecule type" value="protein"/>
</dbReference>
<dbReference type="Bgee" id="ENSG00000196305">
    <property type="expression patterns" value="Expressed in cartilage tissue and 211 other cell types or tissues"/>
</dbReference>
<dbReference type="ExpressionAtlas" id="P41252">
    <property type="expression patterns" value="baseline and differential"/>
</dbReference>
<dbReference type="GO" id="GO:0017101">
    <property type="term" value="C:aminoacyl-tRNA synthetase multienzyme complex"/>
    <property type="evidence" value="ECO:0000314"/>
    <property type="project" value="UniProtKB"/>
</dbReference>
<dbReference type="GO" id="GO:0005737">
    <property type="term" value="C:cytoplasm"/>
    <property type="evidence" value="ECO:0000314"/>
    <property type="project" value="CAFA"/>
</dbReference>
<dbReference type="GO" id="GO:0005829">
    <property type="term" value="C:cytosol"/>
    <property type="evidence" value="ECO:0000314"/>
    <property type="project" value="UniProtKB"/>
</dbReference>
<dbReference type="GO" id="GO:0070062">
    <property type="term" value="C:extracellular exosome"/>
    <property type="evidence" value="ECO:0007005"/>
    <property type="project" value="UniProtKB"/>
</dbReference>
<dbReference type="GO" id="GO:0016020">
    <property type="term" value="C:membrane"/>
    <property type="evidence" value="ECO:0007005"/>
    <property type="project" value="UniProtKB"/>
</dbReference>
<dbReference type="GO" id="GO:0005654">
    <property type="term" value="C:nucleoplasm"/>
    <property type="evidence" value="ECO:0000314"/>
    <property type="project" value="HPA"/>
</dbReference>
<dbReference type="GO" id="GO:0002161">
    <property type="term" value="F:aminoacyl-tRNA deacylase activity"/>
    <property type="evidence" value="ECO:0007669"/>
    <property type="project" value="InterPro"/>
</dbReference>
<dbReference type="GO" id="GO:0005524">
    <property type="term" value="F:ATP binding"/>
    <property type="evidence" value="ECO:0007669"/>
    <property type="project" value="UniProtKB-KW"/>
</dbReference>
<dbReference type="GO" id="GO:0051020">
    <property type="term" value="F:GTPase binding"/>
    <property type="evidence" value="ECO:0000353"/>
    <property type="project" value="UniProtKB"/>
</dbReference>
<dbReference type="GO" id="GO:0004822">
    <property type="term" value="F:isoleucine-tRNA ligase activity"/>
    <property type="evidence" value="ECO:0000314"/>
    <property type="project" value="UniProtKB"/>
</dbReference>
<dbReference type="GO" id="GO:0000049">
    <property type="term" value="F:tRNA binding"/>
    <property type="evidence" value="ECO:0007669"/>
    <property type="project" value="InterPro"/>
</dbReference>
<dbReference type="GO" id="GO:0006428">
    <property type="term" value="P:isoleucyl-tRNA aminoacylation"/>
    <property type="evidence" value="ECO:0000314"/>
    <property type="project" value="UniProtKB"/>
</dbReference>
<dbReference type="GO" id="GO:0001649">
    <property type="term" value="P:osteoblast differentiation"/>
    <property type="evidence" value="ECO:0007005"/>
    <property type="project" value="UniProtKB"/>
</dbReference>
<dbReference type="GO" id="GO:0006418">
    <property type="term" value="P:tRNA aminoacylation for protein translation"/>
    <property type="evidence" value="ECO:0000304"/>
    <property type="project" value="Reactome"/>
</dbReference>
<dbReference type="CDD" id="cd07961">
    <property type="entry name" value="Anticodon_Ia_Ile_ABEc"/>
    <property type="match status" value="1"/>
</dbReference>
<dbReference type="CDD" id="cd00818">
    <property type="entry name" value="IleRS_core"/>
    <property type="match status" value="1"/>
</dbReference>
<dbReference type="FunFam" id="3.90.740.10:FF:000056">
    <property type="entry name" value="Isoleucine--tRNA ligase, cytoplasmic"/>
    <property type="match status" value="1"/>
</dbReference>
<dbReference type="FunFam" id="3.40.50.620:FF:000414">
    <property type="entry name" value="Isoleucine--tRNA ligase, cytoplasmic-like"/>
    <property type="match status" value="1"/>
</dbReference>
<dbReference type="FunFam" id="1.10.730.10:FF:000004">
    <property type="entry name" value="Isoleucyl-tRNA synthetase, cytoplasmic"/>
    <property type="match status" value="1"/>
</dbReference>
<dbReference type="FunFam" id="3.40.50.620:FF:000050">
    <property type="entry name" value="Isoleucyl-tRNA synthetase,cytoplasmic"/>
    <property type="match status" value="1"/>
</dbReference>
<dbReference type="Gene3D" id="3.40.50.620">
    <property type="entry name" value="HUPs"/>
    <property type="match status" value="2"/>
</dbReference>
<dbReference type="Gene3D" id="1.10.730.10">
    <property type="entry name" value="Isoleucyl-tRNA Synthetase, Domain 1"/>
    <property type="match status" value="1"/>
</dbReference>
<dbReference type="HAMAP" id="MF_02003">
    <property type="entry name" value="Ile_tRNA_synth_type2"/>
    <property type="match status" value="1"/>
</dbReference>
<dbReference type="InterPro" id="IPR001412">
    <property type="entry name" value="aa-tRNA-synth_I_CS"/>
</dbReference>
<dbReference type="InterPro" id="IPR002300">
    <property type="entry name" value="aa-tRNA-synth_Ia"/>
</dbReference>
<dbReference type="InterPro" id="IPR033709">
    <property type="entry name" value="Anticodon_Ile_ABEc"/>
</dbReference>
<dbReference type="InterPro" id="IPR002301">
    <property type="entry name" value="Ile-tRNA-ligase"/>
</dbReference>
<dbReference type="InterPro" id="IPR023586">
    <property type="entry name" value="Ile-tRNA-ligase_type2"/>
</dbReference>
<dbReference type="InterPro" id="IPR013155">
    <property type="entry name" value="M/V/L/I-tRNA-synth_anticd-bd"/>
</dbReference>
<dbReference type="InterPro" id="IPR014729">
    <property type="entry name" value="Rossmann-like_a/b/a_fold"/>
</dbReference>
<dbReference type="InterPro" id="IPR009080">
    <property type="entry name" value="tRNAsynth_Ia_anticodon-bd"/>
</dbReference>
<dbReference type="InterPro" id="IPR057033">
    <property type="entry name" value="Ubiquitin_IARS1"/>
</dbReference>
<dbReference type="InterPro" id="IPR009008">
    <property type="entry name" value="Val/Leu/Ile-tRNA-synth_edit"/>
</dbReference>
<dbReference type="NCBIfam" id="TIGR00392">
    <property type="entry name" value="ileS"/>
    <property type="match status" value="1"/>
</dbReference>
<dbReference type="PANTHER" id="PTHR42780:SF1">
    <property type="entry name" value="ISOLEUCINE--TRNA LIGASE, CYTOPLASMIC"/>
    <property type="match status" value="1"/>
</dbReference>
<dbReference type="PANTHER" id="PTHR42780">
    <property type="entry name" value="SOLEUCYL-TRNA SYNTHETASE"/>
    <property type="match status" value="1"/>
</dbReference>
<dbReference type="Pfam" id="PF08264">
    <property type="entry name" value="Anticodon_1"/>
    <property type="match status" value="1"/>
</dbReference>
<dbReference type="Pfam" id="PF19302">
    <property type="entry name" value="DUF5915"/>
    <property type="match status" value="1"/>
</dbReference>
<dbReference type="Pfam" id="PF00133">
    <property type="entry name" value="tRNA-synt_1"/>
    <property type="match status" value="1"/>
</dbReference>
<dbReference type="Pfam" id="PF23567">
    <property type="entry name" value="Ubiquitin_IARS1"/>
    <property type="match status" value="2"/>
</dbReference>
<dbReference type="PRINTS" id="PR00984">
    <property type="entry name" value="TRNASYNTHILE"/>
</dbReference>
<dbReference type="SUPFAM" id="SSF47323">
    <property type="entry name" value="Anticodon-binding domain of a subclass of class I aminoacyl-tRNA synthetases"/>
    <property type="match status" value="1"/>
</dbReference>
<dbReference type="SUPFAM" id="SSF52374">
    <property type="entry name" value="Nucleotidylyl transferase"/>
    <property type="match status" value="1"/>
</dbReference>
<dbReference type="SUPFAM" id="SSF50677">
    <property type="entry name" value="ValRS/IleRS/LeuRS editing domain"/>
    <property type="match status" value="1"/>
</dbReference>
<dbReference type="PROSITE" id="PS00178">
    <property type="entry name" value="AA_TRNA_LIGASE_I"/>
    <property type="match status" value="1"/>
</dbReference>
<protein>
    <recommendedName>
        <fullName>Isoleucine--tRNA ligase, cytoplasmic</fullName>
        <ecNumber evidence="8">6.1.1.5</ecNumber>
    </recommendedName>
    <alternativeName>
        <fullName>Isoleucyl-tRNA synthetase</fullName>
        <shortName>IRS</shortName>
        <shortName>IleRS</shortName>
    </alternativeName>
</protein>
<name>SYIC_HUMAN</name>
<gene>
    <name evidence="10" type="primary">IARS1</name>
    <name type="synonym">IARS</name>
</gene>
<comment type="function">
    <text evidence="8">Catalyzes the specific attachment of an amino acid to its cognate tRNA in a 2 step reaction: the amino acid (AA) is first activated by ATP to form AA-AMP and then transferred to the acceptor end of the tRNA.</text>
</comment>
<comment type="catalytic activity">
    <reaction evidence="8">
        <text>tRNA(Ile) + L-isoleucine + ATP = L-isoleucyl-tRNA(Ile) + AMP + diphosphate</text>
        <dbReference type="Rhea" id="RHEA:11060"/>
        <dbReference type="Rhea" id="RHEA-COMP:9666"/>
        <dbReference type="Rhea" id="RHEA-COMP:9695"/>
        <dbReference type="ChEBI" id="CHEBI:30616"/>
        <dbReference type="ChEBI" id="CHEBI:33019"/>
        <dbReference type="ChEBI" id="CHEBI:58045"/>
        <dbReference type="ChEBI" id="CHEBI:78442"/>
        <dbReference type="ChEBI" id="CHEBI:78528"/>
        <dbReference type="ChEBI" id="CHEBI:456215"/>
        <dbReference type="EC" id="6.1.1.5"/>
    </reaction>
</comment>
<comment type="subunit">
    <text evidence="3 4">Part of a multisubunit complex that groups tRNA ligases for Arg (RARS1), Asp (DARS1), Gln (QARS1), Ile (IARS1), Leu (LARS1), Lys (KARS1), Met (MARS1) the bifunctional ligase for Glu and Pro (EPRS1) and the auxiliary subunits AIMP1/p43, AIMP2/p38 and EEF1E1/p18 (PubMed:19131329, PubMed:19289464).</text>
</comment>
<comment type="interaction">
    <interactant intactId="EBI-355303">
        <id>P41252</id>
    </interactant>
    <interactant intactId="EBI-355315">
        <id>P07814</id>
        <label>EPRS1</label>
    </interactant>
    <organismsDiffer>false</organismsDiffer>
    <experiments>9</experiments>
</comment>
<comment type="subcellular location">
    <subcellularLocation>
        <location evidence="6 7">Cytoplasm</location>
    </subcellularLocation>
    <subcellularLocation>
        <location evidence="4">Cytoplasm</location>
        <location evidence="4">Cytosol</location>
    </subcellularLocation>
</comment>
<comment type="tissue specificity">
    <text evidence="6">Expressed in liver and muscle (at protein level).</text>
</comment>
<comment type="disease" evidence="6">
    <disease id="DI-04841">
        <name>Growth retardation, impaired intellectual development, hypotonia, and hepatopathy</name>
        <acronym>GRIDHH</acronym>
        <description>An autosomal recessive disorder characterized by severe growth retardation with prenatal onset, intellectual disability, muscular hypotonia, and hepatic dysfunction.</description>
        <dbReference type="MIM" id="617093"/>
    </disease>
    <text>The disease is caused by variants affecting the gene represented in this entry.</text>
</comment>
<comment type="similarity">
    <text evidence="9">Belongs to the class-I aminoacyl-tRNA synthetase family.</text>
</comment>
<comment type="sequence caution" evidence="9">
    <conflict type="erroneous initiation">
        <sequence resource="EMBL-CDS" id="BAA05835"/>
    </conflict>
</comment>
<feature type="chain" id="PRO_0000098597" description="Isoleucine--tRNA ligase, cytoplasmic">
    <location>
        <begin position="1"/>
        <end position="1262"/>
    </location>
</feature>
<feature type="short sequence motif" description="'HIGH' region">
    <location>
        <begin position="48"/>
        <end position="58"/>
    </location>
</feature>
<feature type="short sequence motif" description="'KMSKS' region">
    <location>
        <begin position="600"/>
        <end position="604"/>
    </location>
</feature>
<feature type="binding site" evidence="1">
    <location>
        <position position="603"/>
    </location>
    <ligand>
        <name>ATP</name>
        <dbReference type="ChEBI" id="CHEBI:30616"/>
    </ligand>
</feature>
<feature type="modified residue" description="N-acetylmethionine" evidence="12">
    <location>
        <position position="1"/>
    </location>
</feature>
<feature type="modified residue" description="Phosphoserine" evidence="11 13 14 15">
    <location>
        <position position="1047"/>
    </location>
</feature>
<feature type="modified residue" description="Phosphoserine" evidence="13">
    <location>
        <position position="1049"/>
    </location>
</feature>
<feature type="modified residue" description="Phosphothreonine" evidence="15">
    <location>
        <position position="1058"/>
    </location>
</feature>
<feature type="sequence variant" id="VAR_071387" description="In dbSNP:rs140666586." evidence="5">
    <original>N</original>
    <variation>Y</variation>
    <location>
        <position position="302"/>
    </location>
</feature>
<feature type="sequence variant" id="VAR_077055" description="In GRIDHH; dbSNP:rs886037876." evidence="6">
    <original>V</original>
    <variation>G</variation>
    <location>
        <position position="370"/>
    </location>
</feature>
<feature type="sequence variant" id="VAR_077056" description="In GRIDHH; dbSNP:rs886037874." evidence="6">
    <original>P</original>
    <variation>L</variation>
    <location>
        <position position="437"/>
    </location>
</feature>
<feature type="sequence variant" id="VAR_058300" description="In dbSNP:rs2070053.">
    <original>T</original>
    <variation>M</variation>
    <location>
        <position position="684"/>
    </location>
</feature>
<feature type="sequence variant" id="VAR_057951" evidence="7">
    <original>M</original>
    <variation>I</variation>
    <location>
        <position position="769"/>
    </location>
</feature>
<feature type="sequence variant" id="VAR_077057" description="In GRIDHH; dbSNP:rs886037877." evidence="6">
    <original>N</original>
    <variation>D</variation>
    <location>
        <position position="992"/>
    </location>
</feature>
<feature type="sequence variant" id="VAR_077058" description="In GRIDHH; dbSNP:rs886037873." evidence="6">
    <original>I</original>
    <variation>N</variation>
    <location>
        <position position="1174"/>
    </location>
</feature>
<feature type="sequence variant" id="VAR_057952" description="In dbSNP:rs556155." evidence="2">
    <original>K</original>
    <variation>E</variation>
    <location>
        <position position="1182"/>
    </location>
</feature>
<feature type="sequence variant" id="VAR_071388" description="In dbSNP:rs201071417." evidence="5">
    <original>M</original>
    <variation>T</variation>
    <location>
        <position position="1188"/>
    </location>
</feature>
<feature type="sequence conflict" description="In Ref. 4; CAD97671." evidence="9" ref="4">
    <original>N</original>
    <variation>S</variation>
    <location>
        <position position="658"/>
    </location>
</feature>
<proteinExistence type="evidence at protein level"/>
<evidence type="ECO:0000250" key="1"/>
<evidence type="ECO:0000269" key="2">
    <source>
    </source>
</evidence>
<evidence type="ECO:0000269" key="3">
    <source>
    </source>
</evidence>
<evidence type="ECO:0000269" key="4">
    <source>
    </source>
</evidence>
<evidence type="ECO:0000269" key="5">
    <source>
    </source>
</evidence>
<evidence type="ECO:0000269" key="6">
    <source>
    </source>
</evidence>
<evidence type="ECO:0000269" key="7">
    <source>
    </source>
</evidence>
<evidence type="ECO:0000269" key="8">
    <source>
    </source>
</evidence>
<evidence type="ECO:0000305" key="9"/>
<evidence type="ECO:0000312" key="10">
    <source>
        <dbReference type="HGNC" id="HGNC:5330"/>
    </source>
</evidence>
<evidence type="ECO:0007744" key="11">
    <source>
    </source>
</evidence>
<evidence type="ECO:0007744" key="12">
    <source>
    </source>
</evidence>
<evidence type="ECO:0007744" key="13">
    <source>
    </source>
</evidence>
<evidence type="ECO:0007744" key="14">
    <source>
    </source>
</evidence>
<evidence type="ECO:0007744" key="15">
    <source>
    </source>
</evidence>
<keyword id="KW-0007">Acetylation</keyword>
<keyword id="KW-0030">Aminoacyl-tRNA synthetase</keyword>
<keyword id="KW-0067">ATP-binding</keyword>
<keyword id="KW-0963">Cytoplasm</keyword>
<keyword id="KW-0903">Direct protein sequencing</keyword>
<keyword id="KW-0225">Disease variant</keyword>
<keyword id="KW-0991">Intellectual disability</keyword>
<keyword id="KW-0436">Ligase</keyword>
<keyword id="KW-0547">Nucleotide-binding</keyword>
<keyword id="KW-0597">Phosphoprotein</keyword>
<keyword id="KW-0648">Protein biosynthesis</keyword>
<keyword id="KW-1267">Proteomics identification</keyword>
<keyword id="KW-1185">Reference proteome</keyword>
<organism>
    <name type="scientific">Homo sapiens</name>
    <name type="common">Human</name>
    <dbReference type="NCBI Taxonomy" id="9606"/>
    <lineage>
        <taxon>Eukaryota</taxon>
        <taxon>Metazoa</taxon>
        <taxon>Chordata</taxon>
        <taxon>Craniata</taxon>
        <taxon>Vertebrata</taxon>
        <taxon>Euteleostomi</taxon>
        <taxon>Mammalia</taxon>
        <taxon>Eutheria</taxon>
        <taxon>Euarchontoglires</taxon>
        <taxon>Primates</taxon>
        <taxon>Haplorrhini</taxon>
        <taxon>Catarrhini</taxon>
        <taxon>Hominidae</taxon>
        <taxon>Homo</taxon>
    </lineage>
</organism>
<sequence length="1262" mass="144498">MLQQVPENINFPAEEEKILEFWTEFNCFQECLKQSKHKPKFTFYDGPPFATGLPHYGHILAGTIKDIVTRYAHQSGFHVDRRFGWDCHGLPVEYEIDKTLGIRGPEDVAKMGITEYNNQCRAIVMRYSAEWKSTVSRLGRWIDFDNDYKTLYPQFMESVWWVFKQLYDKGLVYRGVKVMPFSTACNTPLSNFESHQNYKDVQDPSVFVTFPLEEDETVSLVAWTTTPWTLPSNLAVCVNPEMQYVKIKDVARGRLLILMEARLSALYKLESDYEILERFPGAYLKGKKYRPLFDYFLKCKENGAFTVLVDNYVKEEEGTGVVHQAPYFGAEDYRVCMDFNIIRKDSLPVCPVDASGCFTTEVTDFAGQYVKDADKSIIRTLKEQGRLLVATTFTHSYPFCWRSDTPLIYKAVPSWFVRVENMVDQLLRNNDLCYWVPELVREKRFGNWLKDARDWTISRNRYWGTPIPLWVSDDFEEVVCIGSVAELEELSGAKISDLHRESVDHLTIPSRCGKGSLHRISEVFDCWFESGSMPYAQVHYPFENKREFEDAFPADFIAEGIDQTRGWFYTLLVLATALFGQPPFKNVIVNGLVLASDGQKMSKRKKNYPDPVSIIQKYGADALRLYLINSPVVRAENLRFKEEGVRDVLKDVLLPWYNAYRFLIQNVLRLQKEEEIEFLYNENTVRESPNITDRWILSFMQSLIGFFETEMAAYRLYTVVPRLVKFVDILTNWYVRMNRRRLKGENGMEDCVMALETLFSVLLSLCRLMAPYTPFLTELMYQNLKVLIDPVSVQDKDTLSIHYLMLPRVREELIDKKTESAVSQMQSVIELGRVIRDRKTIPIKYPLKEIVVIHQDPEALKDIKSLEKYIIEELNVRKVTLSTDKNKYGIRLRAEPDHMVLGKRLKGAFKAVMTSIKQLSSEELEQFQKTGTIVVEGHELHDEDIRLMYTFDQATGGTAQFEAHSDAQALVLLDVTPDQSMVDEGMAREVINRIQKLRKKCNLVPTDEITVYYKAKSEGTYLNSVIESHTEFIFTTIKAPLKPYPVSPSDKVLIQEKTQLKGSELEITLTRGSSLPGPACAYVNLNICANGSEQGGVLLLENPKGDNRLDLLKLKSVVTSIFGVKNTELAVFHDETEIQNQTDLLSLSGKTLCVTAGSAPSLINSSSTLLCQYINLQLLNAKPQECLMGTVGTLLLENPLGQNGLTHQGLLYEAAKVFGLRSRKLKLFLNETQTQEITEDIPVKTLNMKTVYVSVLPTTADF</sequence>
<accession>P41252</accession>
<accession>A8KAE9</accession>
<accession>Q5TCD0</accession>
<accession>Q7Z3T4</accession>
<accession>Q9H588</accession>
<reference key="1">
    <citation type="journal article" date="1994" name="Proc. Natl. Acad. Sci. U.S.A.">
        <title>Human cytoplasmic isoleucyl-tRNA synthetase: selective divergence of the anticodon-binding domain and acquisition of a new structural unit.</title>
        <authorList>
            <person name="Shiba K."/>
            <person name="Suzuki N."/>
            <person name="Shigesada K."/>
            <person name="Schimmel P."/>
            <person name="Noda T."/>
        </authorList>
    </citation>
    <scope>NUCLEOTIDE SEQUENCE [MRNA]</scope>
    <scope>FUNCTION</scope>
    <scope>CATALYTIC ACTIVITY</scope>
</reference>
<reference key="2">
    <citation type="journal article" date="1995" name="Gene">
        <title>Human isoleucyl-tRNA synthetase: sequence of the cDNA, alternative mRNA splicing, and the characteristics of an unusually long C-terminal extension.</title>
        <authorList>
            <person name="Nichols R.C."/>
            <person name="Raben N."/>
            <person name="Boerkoel C.F."/>
            <person name="Plotz P.H."/>
        </authorList>
    </citation>
    <scope>NUCLEOTIDE SEQUENCE [MRNA]</scope>
    <scope>PARTIAL PROTEIN SEQUENCE</scope>
    <scope>SUBCELLULAR LOCATION</scope>
    <scope>VARIANT ILE-769</scope>
    <source>
        <tissue>Liver</tissue>
    </source>
</reference>
<reference key="3">
    <citation type="journal article" date="2004" name="Nat. Genet.">
        <title>Complete sequencing and characterization of 21,243 full-length human cDNAs.</title>
        <authorList>
            <person name="Ota T."/>
            <person name="Suzuki Y."/>
            <person name="Nishikawa T."/>
            <person name="Otsuki T."/>
            <person name="Sugiyama T."/>
            <person name="Irie R."/>
            <person name="Wakamatsu A."/>
            <person name="Hayashi K."/>
            <person name="Sato H."/>
            <person name="Nagai K."/>
            <person name="Kimura K."/>
            <person name="Makita H."/>
            <person name="Sekine M."/>
            <person name="Obayashi M."/>
            <person name="Nishi T."/>
            <person name="Shibahara T."/>
            <person name="Tanaka T."/>
            <person name="Ishii S."/>
            <person name="Yamamoto J."/>
            <person name="Saito K."/>
            <person name="Kawai Y."/>
            <person name="Isono Y."/>
            <person name="Nakamura Y."/>
            <person name="Nagahari K."/>
            <person name="Murakami K."/>
            <person name="Yasuda T."/>
            <person name="Iwayanagi T."/>
            <person name="Wagatsuma M."/>
            <person name="Shiratori A."/>
            <person name="Sudo H."/>
            <person name="Hosoiri T."/>
            <person name="Kaku Y."/>
            <person name="Kodaira H."/>
            <person name="Kondo H."/>
            <person name="Sugawara M."/>
            <person name="Takahashi M."/>
            <person name="Kanda K."/>
            <person name="Yokoi T."/>
            <person name="Furuya T."/>
            <person name="Kikkawa E."/>
            <person name="Omura Y."/>
            <person name="Abe K."/>
            <person name="Kamihara K."/>
            <person name="Katsuta N."/>
            <person name="Sato K."/>
            <person name="Tanikawa M."/>
            <person name="Yamazaki M."/>
            <person name="Ninomiya K."/>
            <person name="Ishibashi T."/>
            <person name="Yamashita H."/>
            <person name="Murakawa K."/>
            <person name="Fujimori K."/>
            <person name="Tanai H."/>
            <person name="Kimata M."/>
            <person name="Watanabe M."/>
            <person name="Hiraoka S."/>
            <person name="Chiba Y."/>
            <person name="Ishida S."/>
            <person name="Ono Y."/>
            <person name="Takiguchi S."/>
            <person name="Watanabe S."/>
            <person name="Yosida M."/>
            <person name="Hotuta T."/>
            <person name="Kusano J."/>
            <person name="Kanehori K."/>
            <person name="Takahashi-Fujii A."/>
            <person name="Hara H."/>
            <person name="Tanase T.-O."/>
            <person name="Nomura Y."/>
            <person name="Togiya S."/>
            <person name="Komai F."/>
            <person name="Hara R."/>
            <person name="Takeuchi K."/>
            <person name="Arita M."/>
            <person name="Imose N."/>
            <person name="Musashino K."/>
            <person name="Yuuki H."/>
            <person name="Oshima A."/>
            <person name="Sasaki N."/>
            <person name="Aotsuka S."/>
            <person name="Yoshikawa Y."/>
            <person name="Matsunawa H."/>
            <person name="Ichihara T."/>
            <person name="Shiohata N."/>
            <person name="Sano S."/>
            <person name="Moriya S."/>
            <person name="Momiyama H."/>
            <person name="Satoh N."/>
            <person name="Takami S."/>
            <person name="Terashima Y."/>
            <person name="Suzuki O."/>
            <person name="Nakagawa S."/>
            <person name="Senoh A."/>
            <person name="Mizoguchi H."/>
            <person name="Goto Y."/>
            <person name="Shimizu F."/>
            <person name="Wakebe H."/>
            <person name="Hishigaki H."/>
            <person name="Watanabe T."/>
            <person name="Sugiyama A."/>
            <person name="Takemoto M."/>
            <person name="Kawakami B."/>
            <person name="Yamazaki M."/>
            <person name="Watanabe K."/>
            <person name="Kumagai A."/>
            <person name="Itakura S."/>
            <person name="Fukuzumi Y."/>
            <person name="Fujimori Y."/>
            <person name="Komiyama M."/>
            <person name="Tashiro H."/>
            <person name="Tanigami A."/>
            <person name="Fujiwara T."/>
            <person name="Ono T."/>
            <person name="Yamada K."/>
            <person name="Fujii Y."/>
            <person name="Ozaki K."/>
            <person name="Hirao M."/>
            <person name="Ohmori Y."/>
            <person name="Kawabata A."/>
            <person name="Hikiji T."/>
            <person name="Kobatake N."/>
            <person name="Inagaki H."/>
            <person name="Ikema Y."/>
            <person name="Okamoto S."/>
            <person name="Okitani R."/>
            <person name="Kawakami T."/>
            <person name="Noguchi S."/>
            <person name="Itoh T."/>
            <person name="Shigeta K."/>
            <person name="Senba T."/>
            <person name="Matsumura K."/>
            <person name="Nakajima Y."/>
            <person name="Mizuno T."/>
            <person name="Morinaga M."/>
            <person name="Sasaki M."/>
            <person name="Togashi T."/>
            <person name="Oyama M."/>
            <person name="Hata H."/>
            <person name="Watanabe M."/>
            <person name="Komatsu T."/>
            <person name="Mizushima-Sugano J."/>
            <person name="Satoh T."/>
            <person name="Shirai Y."/>
            <person name="Takahashi Y."/>
            <person name="Nakagawa K."/>
            <person name="Okumura K."/>
            <person name="Nagase T."/>
            <person name="Nomura N."/>
            <person name="Kikuchi H."/>
            <person name="Masuho Y."/>
            <person name="Yamashita R."/>
            <person name="Nakai K."/>
            <person name="Yada T."/>
            <person name="Nakamura Y."/>
            <person name="Ohara O."/>
            <person name="Isogai T."/>
            <person name="Sugano S."/>
        </authorList>
    </citation>
    <scope>NUCLEOTIDE SEQUENCE [LARGE SCALE MRNA]</scope>
    <source>
        <tissue>Trachea</tissue>
    </source>
</reference>
<reference key="4">
    <citation type="journal article" date="2007" name="BMC Genomics">
        <title>The full-ORF clone resource of the German cDNA consortium.</title>
        <authorList>
            <person name="Bechtel S."/>
            <person name="Rosenfelder H."/>
            <person name="Duda A."/>
            <person name="Schmidt C.P."/>
            <person name="Ernst U."/>
            <person name="Wellenreuther R."/>
            <person name="Mehrle A."/>
            <person name="Schuster C."/>
            <person name="Bahr A."/>
            <person name="Bloecker H."/>
            <person name="Heubner D."/>
            <person name="Hoerlein A."/>
            <person name="Michel G."/>
            <person name="Wedler H."/>
            <person name="Koehrer K."/>
            <person name="Ottenwaelder B."/>
            <person name="Poustka A."/>
            <person name="Wiemann S."/>
            <person name="Schupp I."/>
        </authorList>
    </citation>
    <scope>NUCLEOTIDE SEQUENCE [LARGE SCALE MRNA]</scope>
    <scope>VARIANT GLU-1182</scope>
    <source>
        <tissue>Colon endothelium</tissue>
    </source>
</reference>
<reference key="5">
    <citation type="journal article" date="2004" name="Nature">
        <title>DNA sequence and analysis of human chromosome 9.</title>
        <authorList>
            <person name="Humphray S.J."/>
            <person name="Oliver K."/>
            <person name="Hunt A.R."/>
            <person name="Plumb R.W."/>
            <person name="Loveland J.E."/>
            <person name="Howe K.L."/>
            <person name="Andrews T.D."/>
            <person name="Searle S."/>
            <person name="Hunt S.E."/>
            <person name="Scott C.E."/>
            <person name="Jones M.C."/>
            <person name="Ainscough R."/>
            <person name="Almeida J.P."/>
            <person name="Ambrose K.D."/>
            <person name="Ashwell R.I.S."/>
            <person name="Babbage A.K."/>
            <person name="Babbage S."/>
            <person name="Bagguley C.L."/>
            <person name="Bailey J."/>
            <person name="Banerjee R."/>
            <person name="Barker D.J."/>
            <person name="Barlow K.F."/>
            <person name="Bates K."/>
            <person name="Beasley H."/>
            <person name="Beasley O."/>
            <person name="Bird C.P."/>
            <person name="Bray-Allen S."/>
            <person name="Brown A.J."/>
            <person name="Brown J.Y."/>
            <person name="Burford D."/>
            <person name="Burrill W."/>
            <person name="Burton J."/>
            <person name="Carder C."/>
            <person name="Carter N.P."/>
            <person name="Chapman J.C."/>
            <person name="Chen Y."/>
            <person name="Clarke G."/>
            <person name="Clark S.Y."/>
            <person name="Clee C.M."/>
            <person name="Clegg S."/>
            <person name="Collier R.E."/>
            <person name="Corby N."/>
            <person name="Crosier M."/>
            <person name="Cummings A.T."/>
            <person name="Davies J."/>
            <person name="Dhami P."/>
            <person name="Dunn M."/>
            <person name="Dutta I."/>
            <person name="Dyer L.W."/>
            <person name="Earthrowl M.E."/>
            <person name="Faulkner L."/>
            <person name="Fleming C.J."/>
            <person name="Frankish A."/>
            <person name="Frankland J.A."/>
            <person name="French L."/>
            <person name="Fricker D.G."/>
            <person name="Garner P."/>
            <person name="Garnett J."/>
            <person name="Ghori J."/>
            <person name="Gilbert J.G.R."/>
            <person name="Glison C."/>
            <person name="Grafham D.V."/>
            <person name="Gribble S."/>
            <person name="Griffiths C."/>
            <person name="Griffiths-Jones S."/>
            <person name="Grocock R."/>
            <person name="Guy J."/>
            <person name="Hall R.E."/>
            <person name="Hammond S."/>
            <person name="Harley J.L."/>
            <person name="Harrison E.S.I."/>
            <person name="Hart E.A."/>
            <person name="Heath P.D."/>
            <person name="Henderson C.D."/>
            <person name="Hopkins B.L."/>
            <person name="Howard P.J."/>
            <person name="Howden P.J."/>
            <person name="Huckle E."/>
            <person name="Johnson C."/>
            <person name="Johnson D."/>
            <person name="Joy A.A."/>
            <person name="Kay M."/>
            <person name="Keenan S."/>
            <person name="Kershaw J.K."/>
            <person name="Kimberley A.M."/>
            <person name="King A."/>
            <person name="Knights A."/>
            <person name="Laird G.K."/>
            <person name="Langford C."/>
            <person name="Lawlor S."/>
            <person name="Leongamornlert D.A."/>
            <person name="Leversha M."/>
            <person name="Lloyd C."/>
            <person name="Lloyd D.M."/>
            <person name="Lovell J."/>
            <person name="Martin S."/>
            <person name="Mashreghi-Mohammadi M."/>
            <person name="Matthews L."/>
            <person name="McLaren S."/>
            <person name="McLay K.E."/>
            <person name="McMurray A."/>
            <person name="Milne S."/>
            <person name="Nickerson T."/>
            <person name="Nisbett J."/>
            <person name="Nordsiek G."/>
            <person name="Pearce A.V."/>
            <person name="Peck A.I."/>
            <person name="Porter K.M."/>
            <person name="Pandian R."/>
            <person name="Pelan S."/>
            <person name="Phillimore B."/>
            <person name="Povey S."/>
            <person name="Ramsey Y."/>
            <person name="Rand V."/>
            <person name="Scharfe M."/>
            <person name="Sehra H.K."/>
            <person name="Shownkeen R."/>
            <person name="Sims S.K."/>
            <person name="Skuce C.D."/>
            <person name="Smith M."/>
            <person name="Steward C.A."/>
            <person name="Swarbreck D."/>
            <person name="Sycamore N."/>
            <person name="Tester J."/>
            <person name="Thorpe A."/>
            <person name="Tracey A."/>
            <person name="Tromans A."/>
            <person name="Thomas D.W."/>
            <person name="Wall M."/>
            <person name="Wallis J.M."/>
            <person name="West A.P."/>
            <person name="Whitehead S.L."/>
            <person name="Willey D.L."/>
            <person name="Williams S.A."/>
            <person name="Wilming L."/>
            <person name="Wray P.W."/>
            <person name="Young L."/>
            <person name="Ashurst J.L."/>
            <person name="Coulson A."/>
            <person name="Blocker H."/>
            <person name="Durbin R.M."/>
            <person name="Sulston J.E."/>
            <person name="Hubbard T."/>
            <person name="Jackson M.J."/>
            <person name="Bentley D.R."/>
            <person name="Beck S."/>
            <person name="Rogers J."/>
            <person name="Dunham I."/>
        </authorList>
    </citation>
    <scope>NUCLEOTIDE SEQUENCE [LARGE SCALE GENOMIC DNA]</scope>
</reference>
<reference key="6">
    <citation type="submission" date="2005-07" db="EMBL/GenBank/DDBJ databases">
        <authorList>
            <person name="Mural R.J."/>
            <person name="Istrail S."/>
            <person name="Sutton G.G."/>
            <person name="Florea L."/>
            <person name="Halpern A.L."/>
            <person name="Mobarry C.M."/>
            <person name="Lippert R."/>
            <person name="Walenz B."/>
            <person name="Shatkay H."/>
            <person name="Dew I."/>
            <person name="Miller J.R."/>
            <person name="Flanigan M.J."/>
            <person name="Edwards N.J."/>
            <person name="Bolanos R."/>
            <person name="Fasulo D."/>
            <person name="Halldorsson B.V."/>
            <person name="Hannenhalli S."/>
            <person name="Turner R."/>
            <person name="Yooseph S."/>
            <person name="Lu F."/>
            <person name="Nusskern D.R."/>
            <person name="Shue B.C."/>
            <person name="Zheng X.H."/>
            <person name="Zhong F."/>
            <person name="Delcher A.L."/>
            <person name="Huson D.H."/>
            <person name="Kravitz S.A."/>
            <person name="Mouchard L."/>
            <person name="Reinert K."/>
            <person name="Remington K.A."/>
            <person name="Clark A.G."/>
            <person name="Waterman M.S."/>
            <person name="Eichler E.E."/>
            <person name="Adams M.D."/>
            <person name="Hunkapiller M.W."/>
            <person name="Myers E.W."/>
            <person name="Venter J.C."/>
        </authorList>
    </citation>
    <scope>NUCLEOTIDE SEQUENCE [LARGE SCALE GENOMIC DNA]</scope>
</reference>
<reference key="7">
    <citation type="journal article" date="2008" name="Proc. Natl. Acad. Sci. U.S.A.">
        <title>A quantitative atlas of mitotic phosphorylation.</title>
        <authorList>
            <person name="Dephoure N."/>
            <person name="Zhou C."/>
            <person name="Villen J."/>
            <person name="Beausoleil S.A."/>
            <person name="Bakalarski C.E."/>
            <person name="Elledge S.J."/>
            <person name="Gygi S.P."/>
        </authorList>
    </citation>
    <scope>PHOSPHORYLATION [LARGE SCALE ANALYSIS] AT SER-1047</scope>
    <scope>IDENTIFICATION BY MASS SPECTROMETRY [LARGE SCALE ANALYSIS]</scope>
    <source>
        <tissue>Cervix carcinoma</tissue>
    </source>
</reference>
<reference key="8">
    <citation type="journal article" date="2009" name="Anal. Chem.">
        <title>Lys-N and trypsin cover complementary parts of the phosphoproteome in a refined SCX-based approach.</title>
        <authorList>
            <person name="Gauci S."/>
            <person name="Helbig A.O."/>
            <person name="Slijper M."/>
            <person name="Krijgsveld J."/>
            <person name="Heck A.J."/>
            <person name="Mohammed S."/>
        </authorList>
    </citation>
    <scope>ACETYLATION [LARGE SCALE ANALYSIS] AT MET-1</scope>
    <scope>IDENTIFICATION BY MASS SPECTROMETRY [LARGE SCALE ANALYSIS]</scope>
</reference>
<reference key="9">
    <citation type="journal article" date="2009" name="J. Biol. Chem.">
        <title>Dissection of the structural organization of the aminoacyl-tRNA synthetase complex.</title>
        <authorList>
            <person name="Kaminska M."/>
            <person name="Havrylenko S."/>
            <person name="Decottignies P."/>
            <person name="Gillet S."/>
            <person name="Le Marechal P."/>
            <person name="Negrutskii B."/>
            <person name="Mirande M."/>
        </authorList>
    </citation>
    <scope>SUBUNIT</scope>
    <scope>IDENTIFICATION BY MASS SPECTROMETRY</scope>
</reference>
<reference key="10">
    <citation type="journal article" date="2009" name="J. Biol. Chem.">
        <title>Dynamic Organization of Aminoacyl-tRNA Synthetase Complexes in the Cytoplasm of Human Cells.</title>
        <authorList>
            <person name="Kaminska M."/>
            <person name="Havrylenko S."/>
            <person name="Decottignies P."/>
            <person name="Le Marechal P."/>
            <person name="Negrutskii B."/>
            <person name="Mirande M."/>
        </authorList>
    </citation>
    <scope>SUBCELLULAR LOCATION</scope>
    <scope>SUBUNIT</scope>
</reference>
<reference key="11">
    <citation type="journal article" date="2010" name="Sci. Signal.">
        <title>Quantitative phosphoproteomics reveals widespread full phosphorylation site occupancy during mitosis.</title>
        <authorList>
            <person name="Olsen J.V."/>
            <person name="Vermeulen M."/>
            <person name="Santamaria A."/>
            <person name="Kumar C."/>
            <person name="Miller M.L."/>
            <person name="Jensen L.J."/>
            <person name="Gnad F."/>
            <person name="Cox J."/>
            <person name="Jensen T.S."/>
            <person name="Nigg E.A."/>
            <person name="Brunak S."/>
            <person name="Mann M."/>
        </authorList>
    </citation>
    <scope>PHOSPHORYLATION [LARGE SCALE ANALYSIS] AT SER-1047 AND SER-1049</scope>
    <scope>IDENTIFICATION BY MASS SPECTROMETRY [LARGE SCALE ANALYSIS]</scope>
    <source>
        <tissue>Cervix carcinoma</tissue>
    </source>
</reference>
<reference key="12">
    <citation type="journal article" date="2011" name="BMC Syst. Biol.">
        <title>Initial characterization of the human central proteome.</title>
        <authorList>
            <person name="Burkard T.R."/>
            <person name="Planyavsky M."/>
            <person name="Kaupe I."/>
            <person name="Breitwieser F.P."/>
            <person name="Buerckstuemmer T."/>
            <person name="Bennett K.L."/>
            <person name="Superti-Furga G."/>
            <person name="Colinge J."/>
        </authorList>
    </citation>
    <scope>IDENTIFICATION BY MASS SPECTROMETRY [LARGE SCALE ANALYSIS]</scope>
</reference>
<reference key="13">
    <citation type="journal article" date="2011" name="Sci. Signal.">
        <title>System-wide temporal characterization of the proteome and phosphoproteome of human embryonic stem cell differentiation.</title>
        <authorList>
            <person name="Rigbolt K.T."/>
            <person name="Prokhorova T.A."/>
            <person name="Akimov V."/>
            <person name="Henningsen J."/>
            <person name="Johansen P.T."/>
            <person name="Kratchmarova I."/>
            <person name="Kassem M."/>
            <person name="Mann M."/>
            <person name="Olsen J.V."/>
            <person name="Blagoev B."/>
        </authorList>
    </citation>
    <scope>PHOSPHORYLATION [LARGE SCALE ANALYSIS] AT SER-1047</scope>
    <scope>IDENTIFICATION BY MASS SPECTROMETRY [LARGE SCALE ANALYSIS]</scope>
</reference>
<reference key="14">
    <citation type="journal article" date="2013" name="J. Proteome Res.">
        <title>Toward a comprehensive characterization of a human cancer cell phosphoproteome.</title>
        <authorList>
            <person name="Zhou H."/>
            <person name="Di Palma S."/>
            <person name="Preisinger C."/>
            <person name="Peng M."/>
            <person name="Polat A.N."/>
            <person name="Heck A.J."/>
            <person name="Mohammed S."/>
        </authorList>
    </citation>
    <scope>PHOSPHORYLATION [LARGE SCALE ANALYSIS] AT SER-1047 AND THR-1058</scope>
    <scope>IDENTIFICATION BY MASS SPECTROMETRY [LARGE SCALE ANALYSIS]</scope>
    <source>
        <tissue>Cervix carcinoma</tissue>
        <tissue>Erythroleukemia</tissue>
    </source>
</reference>
<reference key="15">
    <citation type="journal article" date="2014" name="J. Proteomics">
        <title>An enzyme assisted RP-RPLC approach for in-depth analysis of human liver phosphoproteome.</title>
        <authorList>
            <person name="Bian Y."/>
            <person name="Song C."/>
            <person name="Cheng K."/>
            <person name="Dong M."/>
            <person name="Wang F."/>
            <person name="Huang J."/>
            <person name="Sun D."/>
            <person name="Wang L."/>
            <person name="Ye M."/>
            <person name="Zou H."/>
        </authorList>
    </citation>
    <scope>IDENTIFICATION BY MASS SPECTROMETRY [LARGE SCALE ANALYSIS]</scope>
    <source>
        <tissue>Liver</tissue>
    </source>
</reference>
<reference key="16">
    <citation type="journal article" date="2015" name="Proteomics">
        <title>N-terminome analysis of the human mitochondrial proteome.</title>
        <authorList>
            <person name="Vaca Jacome A.S."/>
            <person name="Rabilloud T."/>
            <person name="Schaeffer-Reiss C."/>
            <person name="Rompais M."/>
            <person name="Ayoub D."/>
            <person name="Lane L."/>
            <person name="Bairoch A."/>
            <person name="Van Dorsselaer A."/>
            <person name="Carapito C."/>
        </authorList>
    </citation>
    <scope>IDENTIFICATION BY MASS SPECTROMETRY [LARGE SCALE ANALYSIS]</scope>
</reference>
<reference key="17">
    <citation type="journal article" date="2014" name="J. Med. Genet.">
        <title>Mutations in the enzyme glutathione peroxidase 4 cause Sedaghatian-type spondylometaphyseal dysplasia.</title>
        <authorList>
            <consortium name="FORGE Canada Consortium"/>
            <person name="Smith A.C."/>
            <person name="Mears A.J."/>
            <person name="Bunker R."/>
            <person name="Ahmed A."/>
            <person name="MacKenzie M."/>
            <person name="Schwartzentruber J.A."/>
            <person name="Beaulieu C.L."/>
            <person name="Ferretti E."/>
            <person name="Majewski J."/>
            <person name="Bulman D.E."/>
            <person name="Celik F.C."/>
            <person name="Boycott K.M."/>
            <person name="Graham G.E."/>
        </authorList>
    </citation>
    <scope>VARIANTS TYR-302 AND THR-1188</scope>
</reference>
<reference key="18">
    <citation type="journal article" date="2016" name="Am. J. Hum. Genet.">
        <title>Biallelic IARS mutations cause growth retardation with prenatal onset, intellectual disability, muscular hypotonia, and infantile hepatopathy.</title>
        <authorList>
            <person name="Kopajtich R."/>
            <person name="Murayama K."/>
            <person name="Janecke A.R."/>
            <person name="Haack T.B."/>
            <person name="Breuer M."/>
            <person name="Knisely A.S."/>
            <person name="Harting I."/>
            <person name="Ohashi T."/>
            <person name="Okazaki Y."/>
            <person name="Watanabe D."/>
            <person name="Tokuzawa Y."/>
            <person name="Kotzaeridou U."/>
            <person name="Koelker S."/>
            <person name="Sauer S."/>
            <person name="Carl M."/>
            <person name="Straub S."/>
            <person name="Entenmann A."/>
            <person name="Gizewski E."/>
            <person name="Feichtinger R.G."/>
            <person name="Mayr J.A."/>
            <person name="Lackner K."/>
            <person name="Strom T.M."/>
            <person name="Meitinger T."/>
            <person name="Mueller T."/>
            <person name="Ohtake A."/>
            <person name="Hoffmann G.F."/>
            <person name="Prokisch H."/>
            <person name="Staufner C."/>
        </authorList>
    </citation>
    <scope>INVOLVEMENT IN GRIDHH</scope>
    <scope>VARIANTS GRIDHH GLY-370; LEU-437; ASP-992 AND ASN-1174</scope>
    <scope>SUBCELLULAR LOCATION</scope>
    <scope>TISSUE SPECIFICITY</scope>
</reference>